<reference key="1">
    <citation type="journal article" date="2007" name="PLoS ONE">
        <title>Molecular correlates of host specialization in Staphylococcus aureus.</title>
        <authorList>
            <person name="Herron-Olson L."/>
            <person name="Fitzgerald J.R."/>
            <person name="Musser J.M."/>
            <person name="Kapur V."/>
        </authorList>
    </citation>
    <scope>NUCLEOTIDE SEQUENCE [LARGE SCALE GENOMIC DNA]</scope>
    <source>
        <strain>bovine RF122 / ET3-1</strain>
    </source>
</reference>
<comment type="function">
    <text evidence="1">Specifically dimethylates two adjacent adenosines (A1518 and A1519) in the loop of a conserved hairpin near the 3'-end of 16S rRNA in the 30S particle. May play a critical role in biogenesis of 30S subunits.</text>
</comment>
<comment type="catalytic activity">
    <reaction evidence="1">
        <text>adenosine(1518)/adenosine(1519) in 16S rRNA + 4 S-adenosyl-L-methionine = N(6)-dimethyladenosine(1518)/N(6)-dimethyladenosine(1519) in 16S rRNA + 4 S-adenosyl-L-homocysteine + 4 H(+)</text>
        <dbReference type="Rhea" id="RHEA:19609"/>
        <dbReference type="Rhea" id="RHEA-COMP:10232"/>
        <dbReference type="Rhea" id="RHEA-COMP:10233"/>
        <dbReference type="ChEBI" id="CHEBI:15378"/>
        <dbReference type="ChEBI" id="CHEBI:57856"/>
        <dbReference type="ChEBI" id="CHEBI:59789"/>
        <dbReference type="ChEBI" id="CHEBI:74411"/>
        <dbReference type="ChEBI" id="CHEBI:74493"/>
        <dbReference type="EC" id="2.1.1.182"/>
    </reaction>
</comment>
<comment type="subcellular location">
    <subcellularLocation>
        <location evidence="1">Cytoplasm</location>
    </subcellularLocation>
</comment>
<comment type="similarity">
    <text evidence="1">Belongs to the class I-like SAM-binding methyltransferase superfamily. rRNA adenine N(6)-methyltransferase family. RsmA subfamily.</text>
</comment>
<comment type="sequence caution" evidence="2">
    <conflict type="erroneous initiation">
        <sequence resource="EMBL-CDS" id="CAI80130"/>
    </conflict>
</comment>
<evidence type="ECO:0000255" key="1">
    <source>
        <dbReference type="HAMAP-Rule" id="MF_00607"/>
    </source>
</evidence>
<evidence type="ECO:0000305" key="2"/>
<protein>
    <recommendedName>
        <fullName evidence="1">Ribosomal RNA small subunit methyltransferase A</fullName>
        <ecNumber evidence="1">2.1.1.182</ecNumber>
    </recommendedName>
    <alternativeName>
        <fullName evidence="1">16S rRNA (adenine(1518)-N(6)/adenine(1519)-N(6))-dimethyltransferase</fullName>
    </alternativeName>
    <alternativeName>
        <fullName evidence="1">16S rRNA dimethyladenosine transferase</fullName>
    </alternativeName>
    <alternativeName>
        <fullName evidence="1">16S rRNA dimethylase</fullName>
    </alternativeName>
    <alternativeName>
        <fullName evidence="1">S-adenosylmethionine-6-N', N'-adenosyl(rRNA) dimethyltransferase</fullName>
    </alternativeName>
</protein>
<feature type="chain" id="PRO_0000257353" description="Ribosomal RNA small subunit methyltransferase A">
    <location>
        <begin position="1"/>
        <end position="297"/>
    </location>
</feature>
<feature type="binding site" evidence="1">
    <location>
        <position position="31"/>
    </location>
    <ligand>
        <name>S-adenosyl-L-methionine</name>
        <dbReference type="ChEBI" id="CHEBI:59789"/>
    </ligand>
</feature>
<feature type="binding site" evidence="1">
    <location>
        <position position="33"/>
    </location>
    <ligand>
        <name>S-adenosyl-L-methionine</name>
        <dbReference type="ChEBI" id="CHEBI:59789"/>
    </ligand>
</feature>
<feature type="binding site" evidence="1">
    <location>
        <position position="58"/>
    </location>
    <ligand>
        <name>S-adenosyl-L-methionine</name>
        <dbReference type="ChEBI" id="CHEBI:59789"/>
    </ligand>
</feature>
<feature type="binding site" evidence="1">
    <location>
        <position position="79"/>
    </location>
    <ligand>
        <name>S-adenosyl-L-methionine</name>
        <dbReference type="ChEBI" id="CHEBI:59789"/>
    </ligand>
</feature>
<feature type="binding site" evidence="1">
    <location>
        <position position="104"/>
    </location>
    <ligand>
        <name>S-adenosyl-L-methionine</name>
        <dbReference type="ChEBI" id="CHEBI:59789"/>
    </ligand>
</feature>
<feature type="binding site" evidence="1">
    <location>
        <position position="129"/>
    </location>
    <ligand>
        <name>S-adenosyl-L-methionine</name>
        <dbReference type="ChEBI" id="CHEBI:59789"/>
    </ligand>
</feature>
<name>RSMA_STAAB</name>
<sequence length="297" mass="33768">MLDNKDIATPSRMRALLDKYGFNFKKSLGQNFLIDVNIINNIIDASDIDAQTGVIEIGPGMGSLTEQLARHAKRVLAFEIDQRLIPVLNDTLSPYDNVTVINEDILKANIKEAVENHLQDCEKIMVVANLPYYITTPILLNLMQQDIPIDGYVVMMQKEVGERLNAEVGSKAYGSLSIVVQYYTETSKVLTVPKSVFMPPPNVDSIVVKLMQRTEPLVTVDNEEAFFKLAKAAFAQRRKTINNNYQNYFKDGKQHKEVILQWLEQAGIDPRRRGETLSIQDFAKLYEEKKKFPQLEN</sequence>
<proteinExistence type="inferred from homology"/>
<dbReference type="EC" id="2.1.1.182" evidence="1"/>
<dbReference type="EMBL" id="AJ938182">
    <property type="protein sequence ID" value="CAI80130.1"/>
    <property type="status" value="ALT_INIT"/>
    <property type="molecule type" value="Genomic_DNA"/>
</dbReference>
<dbReference type="RefSeq" id="WP_000886497.1">
    <property type="nucleotide sequence ID" value="NC_007622.1"/>
</dbReference>
<dbReference type="SMR" id="Q2YVV2"/>
<dbReference type="KEGG" id="sab:SAB0442"/>
<dbReference type="HOGENOM" id="CLU_041220_0_0_9"/>
<dbReference type="GO" id="GO:0005829">
    <property type="term" value="C:cytosol"/>
    <property type="evidence" value="ECO:0007669"/>
    <property type="project" value="TreeGrafter"/>
</dbReference>
<dbReference type="GO" id="GO:0052908">
    <property type="term" value="F:16S rRNA (adenine(1518)-N(6)/adenine(1519)-N(6))-dimethyltransferase activity"/>
    <property type="evidence" value="ECO:0007669"/>
    <property type="project" value="UniProtKB-EC"/>
</dbReference>
<dbReference type="GO" id="GO:0003723">
    <property type="term" value="F:RNA binding"/>
    <property type="evidence" value="ECO:0007669"/>
    <property type="project" value="UniProtKB-KW"/>
</dbReference>
<dbReference type="CDD" id="cd02440">
    <property type="entry name" value="AdoMet_MTases"/>
    <property type="match status" value="1"/>
</dbReference>
<dbReference type="FunFam" id="1.10.8.100:FF:000002">
    <property type="entry name" value="Ribosomal RNA small subunit methyltransferase A"/>
    <property type="match status" value="1"/>
</dbReference>
<dbReference type="FunFam" id="3.40.50.150:FF:000023">
    <property type="entry name" value="Ribosomal RNA small subunit methyltransferase A"/>
    <property type="match status" value="1"/>
</dbReference>
<dbReference type="Gene3D" id="1.10.8.100">
    <property type="entry name" value="Ribosomal RNA adenine dimethylase-like, domain 2"/>
    <property type="match status" value="1"/>
</dbReference>
<dbReference type="Gene3D" id="3.40.50.150">
    <property type="entry name" value="Vaccinia Virus protein VP39"/>
    <property type="match status" value="1"/>
</dbReference>
<dbReference type="HAMAP" id="MF_00607">
    <property type="entry name" value="16SrRNA_methyltr_A"/>
    <property type="match status" value="1"/>
</dbReference>
<dbReference type="InterPro" id="IPR001737">
    <property type="entry name" value="KsgA/Erm"/>
</dbReference>
<dbReference type="InterPro" id="IPR023165">
    <property type="entry name" value="rRNA_Ade_diMease-like_C"/>
</dbReference>
<dbReference type="InterPro" id="IPR020596">
    <property type="entry name" value="rRNA_Ade_Mease_Trfase_CS"/>
</dbReference>
<dbReference type="InterPro" id="IPR020598">
    <property type="entry name" value="rRNA_Ade_methylase_Trfase_N"/>
</dbReference>
<dbReference type="InterPro" id="IPR011530">
    <property type="entry name" value="rRNA_adenine_dimethylase"/>
</dbReference>
<dbReference type="InterPro" id="IPR029063">
    <property type="entry name" value="SAM-dependent_MTases_sf"/>
</dbReference>
<dbReference type="NCBIfam" id="TIGR00755">
    <property type="entry name" value="ksgA"/>
    <property type="match status" value="1"/>
</dbReference>
<dbReference type="PANTHER" id="PTHR11727">
    <property type="entry name" value="DIMETHYLADENOSINE TRANSFERASE"/>
    <property type="match status" value="1"/>
</dbReference>
<dbReference type="PANTHER" id="PTHR11727:SF7">
    <property type="entry name" value="DIMETHYLADENOSINE TRANSFERASE-RELATED"/>
    <property type="match status" value="1"/>
</dbReference>
<dbReference type="Pfam" id="PF00398">
    <property type="entry name" value="RrnaAD"/>
    <property type="match status" value="1"/>
</dbReference>
<dbReference type="SMART" id="SM00650">
    <property type="entry name" value="rADc"/>
    <property type="match status" value="1"/>
</dbReference>
<dbReference type="SUPFAM" id="SSF53335">
    <property type="entry name" value="S-adenosyl-L-methionine-dependent methyltransferases"/>
    <property type="match status" value="1"/>
</dbReference>
<dbReference type="PROSITE" id="PS01131">
    <property type="entry name" value="RRNA_A_DIMETH"/>
    <property type="match status" value="1"/>
</dbReference>
<dbReference type="PROSITE" id="PS51689">
    <property type="entry name" value="SAM_RNA_A_N6_MT"/>
    <property type="match status" value="1"/>
</dbReference>
<organism>
    <name type="scientific">Staphylococcus aureus (strain bovine RF122 / ET3-1)</name>
    <dbReference type="NCBI Taxonomy" id="273036"/>
    <lineage>
        <taxon>Bacteria</taxon>
        <taxon>Bacillati</taxon>
        <taxon>Bacillota</taxon>
        <taxon>Bacilli</taxon>
        <taxon>Bacillales</taxon>
        <taxon>Staphylococcaceae</taxon>
        <taxon>Staphylococcus</taxon>
    </lineage>
</organism>
<keyword id="KW-0963">Cytoplasm</keyword>
<keyword id="KW-0489">Methyltransferase</keyword>
<keyword id="KW-0694">RNA-binding</keyword>
<keyword id="KW-0698">rRNA processing</keyword>
<keyword id="KW-0949">S-adenosyl-L-methionine</keyword>
<keyword id="KW-0808">Transferase</keyword>
<gene>
    <name evidence="1" type="primary">rsmA</name>
    <name evidence="1" type="synonym">ksgA</name>
    <name type="ordered locus">SAB0442</name>
</gene>
<accession>Q2YVV2</accession>